<reference key="1">
    <citation type="journal article" date="1990" name="Mol. Biol. Evol.">
        <title>Evolution of the glucose dehydrogenase gene in Drosophila.</title>
        <authorList>
            <person name="Krasney P.A."/>
            <person name="Carr C.M."/>
            <person name="Cavener D.R."/>
        </authorList>
    </citation>
    <scope>NUCLEOTIDE SEQUENCE [GENOMIC DNA]</scope>
</reference>
<reference key="2">
    <citation type="journal article" date="2005" name="Genome Res.">
        <title>Comparative genome sequencing of Drosophila pseudoobscura: chromosomal, gene, and cis-element evolution.</title>
        <authorList>
            <person name="Richards S."/>
            <person name="Liu Y."/>
            <person name="Bettencourt B.R."/>
            <person name="Hradecky P."/>
            <person name="Letovsky S."/>
            <person name="Nielsen R."/>
            <person name="Thornton K."/>
            <person name="Hubisz M.J."/>
            <person name="Chen R."/>
            <person name="Meisel R.P."/>
            <person name="Couronne O."/>
            <person name="Hua S."/>
            <person name="Smith M.A."/>
            <person name="Zhang P."/>
            <person name="Liu J."/>
            <person name="Bussemaker H.J."/>
            <person name="van Batenburg M.F."/>
            <person name="Howells S.L."/>
            <person name="Scherer S.E."/>
            <person name="Sodergren E."/>
            <person name="Matthews B.B."/>
            <person name="Crosby M.A."/>
            <person name="Schroeder A.J."/>
            <person name="Ortiz-Barrientos D."/>
            <person name="Rives C.M."/>
            <person name="Metzker M.L."/>
            <person name="Muzny D.M."/>
            <person name="Scott G."/>
            <person name="Steffen D."/>
            <person name="Wheeler D.A."/>
            <person name="Worley K.C."/>
            <person name="Havlak P."/>
            <person name="Durbin K.J."/>
            <person name="Egan A."/>
            <person name="Gill R."/>
            <person name="Hume J."/>
            <person name="Morgan M.B."/>
            <person name="Miner G."/>
            <person name="Hamilton C."/>
            <person name="Huang Y."/>
            <person name="Waldron L."/>
            <person name="Verduzco D."/>
            <person name="Clerc-Blankenburg K.P."/>
            <person name="Dubchak I."/>
            <person name="Noor M.A.F."/>
            <person name="Anderson W."/>
            <person name="White K.P."/>
            <person name="Clark A.G."/>
            <person name="Schaeffer S.W."/>
            <person name="Gelbart W.M."/>
            <person name="Weinstock G.M."/>
            <person name="Gibbs R.A."/>
        </authorList>
    </citation>
    <scope>NUCLEOTIDE SEQUENCE [LARGE SCALE GENOMIC DNA]</scope>
    <source>
        <strain>MV2-25 / Tucson 14011-0121.94</strain>
    </source>
</reference>
<reference key="3">
    <citation type="journal article" date="2005" name="Genetics">
        <title>Patterns of selection on synonymous and nonsynonymous variants in Drosophila miranda.</title>
        <authorList>
            <person name="Bartolome C."/>
            <person name="Maside X."/>
            <person name="Yi S."/>
            <person name="Grant A.L."/>
            <person name="Charlesworth B."/>
        </authorList>
    </citation>
    <scope>NUCLEOTIDE SEQUENCE [GENOMIC DNA] OF 114-605</scope>
</reference>
<reference key="4">
    <citation type="book" date="1998" name="Proceedings of the 39th annual Drosophila research conference">
        <title>Incorporation of selenocysteine at a UGA codon of Gld.</title>
        <authorList>
            <person name="Perlaky S."/>
            <person name="Merritt K."/>
            <person name="Cavener D."/>
        </authorList>
    </citation>
    <scope>SELENOCYSTEINE AT SEC-613</scope>
</reference>
<dbReference type="EC" id="1.1.5.9"/>
<dbReference type="EMBL" id="M29299">
    <property type="protein sequence ID" value="AAA28572.1"/>
    <property type="status" value="ALT_SEQ"/>
    <property type="molecule type" value="Genomic_DNA"/>
</dbReference>
<dbReference type="EMBL" id="CM000070">
    <property type="protein sequence ID" value="EAL28908.1"/>
    <property type="status" value="ALT_SEQ"/>
    <property type="molecule type" value="Genomic_DNA"/>
</dbReference>
<dbReference type="EMBL" id="AY754494">
    <property type="protein sequence ID" value="AAX13069.1"/>
    <property type="molecule type" value="Genomic_DNA"/>
</dbReference>
<dbReference type="PIR" id="B39019">
    <property type="entry name" value="B39019"/>
</dbReference>
<dbReference type="FunCoup" id="P18172">
    <property type="interactions" value="58"/>
</dbReference>
<dbReference type="STRING" id="46245.P18172"/>
<dbReference type="eggNOG" id="KOG1238">
    <property type="taxonomic scope" value="Eukaryota"/>
</dbReference>
<dbReference type="InParanoid" id="P18172"/>
<dbReference type="Proteomes" id="UP000001819">
    <property type="component" value="Unplaced"/>
</dbReference>
<dbReference type="GO" id="GO:0005576">
    <property type="term" value="C:extracellular region"/>
    <property type="evidence" value="ECO:0007669"/>
    <property type="project" value="UniProtKB-SubCell"/>
</dbReference>
<dbReference type="GO" id="GO:0050660">
    <property type="term" value="F:flavin adenine dinucleotide binding"/>
    <property type="evidence" value="ECO:0007669"/>
    <property type="project" value="InterPro"/>
</dbReference>
<dbReference type="GO" id="GO:0140762">
    <property type="term" value="F:glucose dehydrogenase (FAD, quinone) activity"/>
    <property type="evidence" value="ECO:0007669"/>
    <property type="project" value="UniProtKB-EC"/>
</dbReference>
<dbReference type="Gene3D" id="3.50.50.60">
    <property type="entry name" value="FAD/NAD(P)-binding domain"/>
    <property type="match status" value="1"/>
</dbReference>
<dbReference type="Gene3D" id="3.30.560.10">
    <property type="entry name" value="Glucose Oxidase, domain 3"/>
    <property type="match status" value="1"/>
</dbReference>
<dbReference type="InterPro" id="IPR036188">
    <property type="entry name" value="FAD/NAD-bd_sf"/>
</dbReference>
<dbReference type="InterPro" id="IPR012132">
    <property type="entry name" value="GMC_OxRdtase"/>
</dbReference>
<dbReference type="InterPro" id="IPR000172">
    <property type="entry name" value="GMC_OxRdtase_N"/>
</dbReference>
<dbReference type="InterPro" id="IPR007867">
    <property type="entry name" value="GMC_OxRtase_C"/>
</dbReference>
<dbReference type="PANTHER" id="PTHR11552:SF217">
    <property type="entry name" value="GLUCOSE DEHYDROGENASE [FAD, QUINONE]"/>
    <property type="match status" value="1"/>
</dbReference>
<dbReference type="PANTHER" id="PTHR11552">
    <property type="entry name" value="GLUCOSE-METHANOL-CHOLINE GMC OXIDOREDUCTASE"/>
    <property type="match status" value="1"/>
</dbReference>
<dbReference type="Pfam" id="PF05199">
    <property type="entry name" value="GMC_oxred_C"/>
    <property type="match status" value="1"/>
</dbReference>
<dbReference type="Pfam" id="PF00732">
    <property type="entry name" value="GMC_oxred_N"/>
    <property type="match status" value="1"/>
</dbReference>
<dbReference type="PIRSF" id="PIRSF000137">
    <property type="entry name" value="Alcohol_oxidase"/>
    <property type="match status" value="1"/>
</dbReference>
<dbReference type="SUPFAM" id="SSF54373">
    <property type="entry name" value="FAD-linked reductases, C-terminal domain"/>
    <property type="match status" value="1"/>
</dbReference>
<dbReference type="SUPFAM" id="SSF51905">
    <property type="entry name" value="FAD/NAD(P)-binding domain"/>
    <property type="match status" value="1"/>
</dbReference>
<dbReference type="PROSITE" id="PS00623">
    <property type="entry name" value="GMC_OXRED_1"/>
    <property type="match status" value="1"/>
</dbReference>
<dbReference type="PROSITE" id="PS00624">
    <property type="entry name" value="GMC_OXRED_2"/>
    <property type="match status" value="1"/>
</dbReference>
<proteinExistence type="inferred from homology"/>
<organism>
    <name type="scientific">Drosophila pseudoobscura pseudoobscura</name>
    <name type="common">Fruit fly</name>
    <dbReference type="NCBI Taxonomy" id="46245"/>
    <lineage>
        <taxon>Eukaryota</taxon>
        <taxon>Metazoa</taxon>
        <taxon>Ecdysozoa</taxon>
        <taxon>Arthropoda</taxon>
        <taxon>Hexapoda</taxon>
        <taxon>Insecta</taxon>
        <taxon>Pterygota</taxon>
        <taxon>Neoptera</taxon>
        <taxon>Endopterygota</taxon>
        <taxon>Diptera</taxon>
        <taxon>Brachycera</taxon>
        <taxon>Muscomorpha</taxon>
        <taxon>Ephydroidea</taxon>
        <taxon>Drosophilidae</taxon>
        <taxon>Drosophila</taxon>
        <taxon>Sophophora</taxon>
    </lineage>
</organism>
<feature type="signal peptide" evidence="1">
    <location>
        <begin position="1"/>
        <end position="42"/>
    </location>
</feature>
<feature type="chain" id="PRO_0000012336" description="Glucose dehydrogenase [FAD, quinone]">
    <location>
        <begin position="43"/>
        <end position="625"/>
    </location>
</feature>
<feature type="chain" id="PRO_0000012337" description="Glucose dehydrogenase [FAD, quinone] short protein">
    <location>
        <begin position="43"/>
        <end position="612"/>
    </location>
</feature>
<feature type="active site" description="Proton acceptor" evidence="2">
    <location>
        <position position="544"/>
    </location>
</feature>
<feature type="binding site" evidence="3">
    <location>
        <begin position="66"/>
        <end position="95"/>
    </location>
    <ligand>
        <name>FAD</name>
        <dbReference type="ChEBI" id="CHEBI:57692"/>
    </ligand>
</feature>
<feature type="non-standard amino acid" description="Selenocysteine" evidence="3">
    <location>
        <position position="613"/>
    </location>
</feature>
<feature type="sequence conflict" description="In Ref. 1; AAA28572." evidence="3" ref="1">
    <original>D</original>
    <variation>E</variation>
    <location>
        <position position="168"/>
    </location>
</feature>
<feature type="sequence conflict" description="In Ref. 1 and 3." evidence="3" ref="1 3">
    <original>H</original>
    <variation>Q</variation>
    <location>
        <position position="359"/>
    </location>
</feature>
<comment type="catalytic activity">
    <reaction>
        <text>a quinone + D-glucose = D-glucono-1,5-lactone + a quinol</text>
        <dbReference type="Rhea" id="RHEA:47372"/>
        <dbReference type="ChEBI" id="CHEBI:4167"/>
        <dbReference type="ChEBI" id="CHEBI:16217"/>
        <dbReference type="ChEBI" id="CHEBI:24646"/>
        <dbReference type="ChEBI" id="CHEBI:132124"/>
        <dbReference type="EC" id="1.1.5.9"/>
    </reaction>
</comment>
<comment type="cofactor">
    <cofactor>
        <name>FAD</name>
        <dbReference type="ChEBI" id="CHEBI:57692"/>
    </cofactor>
</comment>
<comment type="subcellular location">
    <subcellularLocation>
        <location>Secreted</location>
    </subcellularLocation>
    <text>Secreted as part of the seminal fluid transferred to females.</text>
</comment>
<comment type="similarity">
    <text evidence="3">Belongs to the GMC oxidoreductase family.</text>
</comment>
<comment type="sequence caution" evidence="3">
    <conflict type="erroneous termination">
        <sequence resource="EMBL-CDS" id="AAA28572"/>
    </conflict>
    <text>Truncated C-terminus.</text>
</comment>
<comment type="sequence caution" evidence="3">
    <conflict type="erroneous termination">
        <sequence resource="EMBL-CDS" id="EAL28908"/>
    </conflict>
    <text>Truncated C-terminus.</text>
</comment>
<evidence type="ECO:0000250" key="1"/>
<evidence type="ECO:0000250" key="2">
    <source>
        <dbReference type="UniProtKB" id="E4QP00"/>
    </source>
</evidence>
<evidence type="ECO:0000305" key="3"/>
<keyword id="KW-0274">FAD</keyword>
<keyword id="KW-0285">Flavoprotein</keyword>
<keyword id="KW-0560">Oxidoreductase</keyword>
<keyword id="KW-1185">Reference proteome</keyword>
<keyword id="KW-0964">Secreted</keyword>
<keyword id="KW-0712">Selenocysteine</keyword>
<keyword id="KW-0732">Signal</keyword>
<sequence length="625" mass="68599">MATSPSSCDCLVGVPTGPTLASTCGGSAFMLFMGLLEVFIRSQCDLEDPCGRASTRFRSEPDYEYDFIVIGGGSAGSVVASRLSEVPQWKVLLIEAGGDEPVGAQIPSMFLNFIGSDIDYRYNTEPERMACLSSMEQRCYWPRGKVLGGTSVMNGMMYIRGNREDYDDWAAQGNPGWSYQDVLPFFKKSEDNLELDAVGTEYHAKGGLLPVGKFPYNPPLSYALLKAGEEMGFSVQDLNGQNSTGFMIAQMTARNGIRYSSARAFLRPARMRNNLHILLNTTVTKVLIHPGTKNVVGVEVSDQFGSMRKILVKKEVIVSGGAVNSPQILLLSGVGPKEDLQKVNVRPVHHLPGVGKNLHNHVAYFTNFFIDDADTAPLNWATAMEYLLFRDGLMSGTGISDVTAKMATRWADRPNLPDLQLYFGGYLASCARTGQVGELLSNNSRAIQIFPAVLNPKSRGYITLRSADPLDPPRIFANYLTDERDVKTLVEGIKFAIRLSQTSPLKQYGMRLDKTVVKGCESHAFASDAYWECAVRQNTGPENHQAGSCKMGPSHDPMAVVNHELRVHGVRGLRVMDTSIMPKVTAGNTHAPAVMIAEKGAYLLKRAWGAKVURVDATWTLHRVI</sequence>
<name>DHGL_DROPS</name>
<gene>
    <name type="primary">Gld</name>
    <name type="ORF">GA11047</name>
</gene>
<protein>
    <recommendedName>
        <fullName>Glucose dehydrogenase [FAD, quinone]</fullName>
        <ecNumber>1.1.5.9</ecNumber>
    </recommendedName>
    <component>
        <recommendedName>
            <fullName>Glucose dehydrogenase [FAD, quinone] short protein</fullName>
        </recommendedName>
    </component>
</protein>
<accession>P18172</accession>
<accession>Q294Q6</accession>
<accession>Q56RL3</accession>